<sequence>MADYYDLLGVSKDADGDTLKRAYRRLARQYHPDINKDPGAEDRFKEIGRAYEVLSDPQTRGRYDQFGEAGLGGAAGMPDVGDMGGFADLFETFFSGFGGAGGSGGARPRRRGPQQGDDLRYDLKIDFEQAVFGQEREIKIPHLETCDTCNGTGAKVGSGPTTCSTCGGVGQVRRATRTPFGSFTQVAECPSCEGTGQVIADPCPACAGQGVRQVRKKLRINIPAGVDTGTRLRVAGEGNAGLRGGPSGDLYVFLTVKSHPQLRRDGITVLSEVNVSYLQAILGDIIEVDTVDGNTSLEIPAGTQPNAVLTLENKGIPKLGNPVARGNQRISINVKLPIRLSDEERGLLEELAGHHSAKGRQHHHHNSGLFARLFGQKG</sequence>
<comment type="function">
    <text evidence="1">Participates actively in the response to hyperosmotic and heat shock by preventing the aggregation of stress-denatured proteins and by disaggregating proteins, also in an autonomous, DnaK-independent fashion. Unfolded proteins bind initially to DnaJ; upon interaction with the DnaJ-bound protein, DnaK hydrolyzes its bound ATP, resulting in the formation of a stable complex. GrpE releases ADP from DnaK; ATP binding to DnaK triggers the release of the substrate protein, thus completing the reaction cycle. Several rounds of ATP-dependent interactions between DnaJ, DnaK and GrpE are required for fully efficient folding. Also involved, together with DnaK and GrpE, in the DNA replication of plasmids through activation of initiation proteins.</text>
</comment>
<comment type="cofactor">
    <cofactor evidence="1">
        <name>Zn(2+)</name>
        <dbReference type="ChEBI" id="CHEBI:29105"/>
    </cofactor>
    <text evidence="1">Binds 2 Zn(2+) ions per monomer.</text>
</comment>
<comment type="subunit">
    <text evidence="1">Homodimer.</text>
</comment>
<comment type="subcellular location">
    <subcellularLocation>
        <location evidence="1">Cytoplasm</location>
    </subcellularLocation>
</comment>
<comment type="domain">
    <text evidence="1">The J domain is necessary and sufficient to stimulate DnaK ATPase activity. Zinc center 1 plays an important role in the autonomous, DnaK-independent chaperone activity of DnaJ. Zinc center 2 is essential for interaction with DnaK and for DnaJ activity.</text>
</comment>
<comment type="similarity">
    <text evidence="1">Belongs to the DnaJ family.</text>
</comment>
<name>DNAJ_PROMM</name>
<proteinExistence type="inferred from homology"/>
<feature type="chain" id="PRO_0000070856" description="Chaperone protein DnaJ">
    <location>
        <begin position="1"/>
        <end position="378"/>
    </location>
</feature>
<feature type="domain" description="J" evidence="1">
    <location>
        <begin position="3"/>
        <end position="67"/>
    </location>
</feature>
<feature type="repeat" description="CXXCXGXG motif">
    <location>
        <begin position="146"/>
        <end position="153"/>
    </location>
</feature>
<feature type="repeat" description="CXXCXGXG motif">
    <location>
        <begin position="163"/>
        <end position="170"/>
    </location>
</feature>
<feature type="repeat" description="CXXCXGXG motif">
    <location>
        <begin position="189"/>
        <end position="196"/>
    </location>
</feature>
<feature type="repeat" description="CXXCXGXG motif">
    <location>
        <begin position="203"/>
        <end position="210"/>
    </location>
</feature>
<feature type="zinc finger region" description="CR-type" evidence="1">
    <location>
        <begin position="133"/>
        <end position="215"/>
    </location>
</feature>
<feature type="binding site" evidence="1">
    <location>
        <position position="146"/>
    </location>
    <ligand>
        <name>Zn(2+)</name>
        <dbReference type="ChEBI" id="CHEBI:29105"/>
        <label>1</label>
    </ligand>
</feature>
<feature type="binding site" evidence="1">
    <location>
        <position position="149"/>
    </location>
    <ligand>
        <name>Zn(2+)</name>
        <dbReference type="ChEBI" id="CHEBI:29105"/>
        <label>1</label>
    </ligand>
</feature>
<feature type="binding site" evidence="1">
    <location>
        <position position="163"/>
    </location>
    <ligand>
        <name>Zn(2+)</name>
        <dbReference type="ChEBI" id="CHEBI:29105"/>
        <label>2</label>
    </ligand>
</feature>
<feature type="binding site" evidence="1">
    <location>
        <position position="166"/>
    </location>
    <ligand>
        <name>Zn(2+)</name>
        <dbReference type="ChEBI" id="CHEBI:29105"/>
        <label>2</label>
    </ligand>
</feature>
<feature type="binding site" evidence="1">
    <location>
        <position position="189"/>
    </location>
    <ligand>
        <name>Zn(2+)</name>
        <dbReference type="ChEBI" id="CHEBI:29105"/>
        <label>2</label>
    </ligand>
</feature>
<feature type="binding site" evidence="1">
    <location>
        <position position="192"/>
    </location>
    <ligand>
        <name>Zn(2+)</name>
        <dbReference type="ChEBI" id="CHEBI:29105"/>
        <label>2</label>
    </ligand>
</feature>
<feature type="binding site" evidence="1">
    <location>
        <position position="203"/>
    </location>
    <ligand>
        <name>Zn(2+)</name>
        <dbReference type="ChEBI" id="CHEBI:29105"/>
        <label>1</label>
    </ligand>
</feature>
<feature type="binding site" evidence="1">
    <location>
        <position position="206"/>
    </location>
    <ligand>
        <name>Zn(2+)</name>
        <dbReference type="ChEBI" id="CHEBI:29105"/>
        <label>1</label>
    </ligand>
</feature>
<dbReference type="EMBL" id="BX548175">
    <property type="protein sequence ID" value="CAE20197.1"/>
    <property type="molecule type" value="Genomic_DNA"/>
</dbReference>
<dbReference type="RefSeq" id="WP_011129401.1">
    <property type="nucleotide sequence ID" value="NC_005071.1"/>
</dbReference>
<dbReference type="SMR" id="Q7V9C8"/>
<dbReference type="KEGG" id="pmt:PMT_0022"/>
<dbReference type="eggNOG" id="COG0484">
    <property type="taxonomic scope" value="Bacteria"/>
</dbReference>
<dbReference type="HOGENOM" id="CLU_017633_0_1_3"/>
<dbReference type="OrthoDB" id="9779889at2"/>
<dbReference type="Proteomes" id="UP000001423">
    <property type="component" value="Chromosome"/>
</dbReference>
<dbReference type="GO" id="GO:0005737">
    <property type="term" value="C:cytoplasm"/>
    <property type="evidence" value="ECO:0007669"/>
    <property type="project" value="UniProtKB-SubCell"/>
</dbReference>
<dbReference type="GO" id="GO:0005524">
    <property type="term" value="F:ATP binding"/>
    <property type="evidence" value="ECO:0007669"/>
    <property type="project" value="InterPro"/>
</dbReference>
<dbReference type="GO" id="GO:0031072">
    <property type="term" value="F:heat shock protein binding"/>
    <property type="evidence" value="ECO:0007669"/>
    <property type="project" value="InterPro"/>
</dbReference>
<dbReference type="GO" id="GO:0051082">
    <property type="term" value="F:unfolded protein binding"/>
    <property type="evidence" value="ECO:0007669"/>
    <property type="project" value="UniProtKB-UniRule"/>
</dbReference>
<dbReference type="GO" id="GO:0008270">
    <property type="term" value="F:zinc ion binding"/>
    <property type="evidence" value="ECO:0007669"/>
    <property type="project" value="UniProtKB-UniRule"/>
</dbReference>
<dbReference type="GO" id="GO:0051085">
    <property type="term" value="P:chaperone cofactor-dependent protein refolding"/>
    <property type="evidence" value="ECO:0007669"/>
    <property type="project" value="TreeGrafter"/>
</dbReference>
<dbReference type="GO" id="GO:0006260">
    <property type="term" value="P:DNA replication"/>
    <property type="evidence" value="ECO:0007669"/>
    <property type="project" value="UniProtKB-KW"/>
</dbReference>
<dbReference type="GO" id="GO:0042026">
    <property type="term" value="P:protein refolding"/>
    <property type="evidence" value="ECO:0007669"/>
    <property type="project" value="TreeGrafter"/>
</dbReference>
<dbReference type="GO" id="GO:0009408">
    <property type="term" value="P:response to heat"/>
    <property type="evidence" value="ECO:0007669"/>
    <property type="project" value="InterPro"/>
</dbReference>
<dbReference type="CDD" id="cd06257">
    <property type="entry name" value="DnaJ"/>
    <property type="match status" value="1"/>
</dbReference>
<dbReference type="CDD" id="cd10747">
    <property type="entry name" value="DnaJ_C"/>
    <property type="match status" value="1"/>
</dbReference>
<dbReference type="CDD" id="cd10719">
    <property type="entry name" value="DnaJ_zf"/>
    <property type="match status" value="1"/>
</dbReference>
<dbReference type="FunFam" id="2.60.260.20:FF:000005">
    <property type="entry name" value="Chaperone protein dnaJ 1, mitochondrial"/>
    <property type="match status" value="1"/>
</dbReference>
<dbReference type="FunFam" id="2.10.230.10:FF:000002">
    <property type="entry name" value="Molecular chaperone DnaJ"/>
    <property type="match status" value="1"/>
</dbReference>
<dbReference type="Gene3D" id="1.10.287.110">
    <property type="entry name" value="DnaJ domain"/>
    <property type="match status" value="1"/>
</dbReference>
<dbReference type="Gene3D" id="2.10.230.10">
    <property type="entry name" value="Heat shock protein DnaJ, cysteine-rich domain"/>
    <property type="match status" value="1"/>
</dbReference>
<dbReference type="Gene3D" id="2.60.260.20">
    <property type="entry name" value="Urease metallochaperone UreE, N-terminal domain"/>
    <property type="match status" value="2"/>
</dbReference>
<dbReference type="HAMAP" id="MF_01152">
    <property type="entry name" value="DnaJ"/>
    <property type="match status" value="1"/>
</dbReference>
<dbReference type="InterPro" id="IPR012724">
    <property type="entry name" value="DnaJ"/>
</dbReference>
<dbReference type="InterPro" id="IPR002939">
    <property type="entry name" value="DnaJ_C"/>
</dbReference>
<dbReference type="InterPro" id="IPR001623">
    <property type="entry name" value="DnaJ_domain"/>
</dbReference>
<dbReference type="InterPro" id="IPR018253">
    <property type="entry name" value="DnaJ_domain_CS"/>
</dbReference>
<dbReference type="InterPro" id="IPR008971">
    <property type="entry name" value="HSP40/DnaJ_pept-bd"/>
</dbReference>
<dbReference type="InterPro" id="IPR001305">
    <property type="entry name" value="HSP_DnaJ_Cys-rich_dom"/>
</dbReference>
<dbReference type="InterPro" id="IPR036410">
    <property type="entry name" value="HSP_DnaJ_Cys-rich_dom_sf"/>
</dbReference>
<dbReference type="InterPro" id="IPR036869">
    <property type="entry name" value="J_dom_sf"/>
</dbReference>
<dbReference type="NCBIfam" id="TIGR02349">
    <property type="entry name" value="DnaJ_bact"/>
    <property type="match status" value="1"/>
</dbReference>
<dbReference type="NCBIfam" id="NF008035">
    <property type="entry name" value="PRK10767.1"/>
    <property type="match status" value="1"/>
</dbReference>
<dbReference type="NCBIfam" id="NF010886">
    <property type="entry name" value="PRK14293.1"/>
    <property type="match status" value="1"/>
</dbReference>
<dbReference type="PANTHER" id="PTHR43096:SF10">
    <property type="entry name" value="CHAPERONE PROTEIN DNAJ A6, CHLOROPLASTIC"/>
    <property type="match status" value="1"/>
</dbReference>
<dbReference type="PANTHER" id="PTHR43096">
    <property type="entry name" value="DNAJ HOMOLOG 1, MITOCHONDRIAL-RELATED"/>
    <property type="match status" value="1"/>
</dbReference>
<dbReference type="Pfam" id="PF00226">
    <property type="entry name" value="DnaJ"/>
    <property type="match status" value="1"/>
</dbReference>
<dbReference type="Pfam" id="PF01556">
    <property type="entry name" value="DnaJ_C"/>
    <property type="match status" value="1"/>
</dbReference>
<dbReference type="Pfam" id="PF00684">
    <property type="entry name" value="DnaJ_CXXCXGXG"/>
    <property type="match status" value="1"/>
</dbReference>
<dbReference type="PRINTS" id="PR00625">
    <property type="entry name" value="JDOMAIN"/>
</dbReference>
<dbReference type="SMART" id="SM00271">
    <property type="entry name" value="DnaJ"/>
    <property type="match status" value="1"/>
</dbReference>
<dbReference type="SUPFAM" id="SSF46565">
    <property type="entry name" value="Chaperone J-domain"/>
    <property type="match status" value="1"/>
</dbReference>
<dbReference type="SUPFAM" id="SSF57938">
    <property type="entry name" value="DnaJ/Hsp40 cysteine-rich domain"/>
    <property type="match status" value="1"/>
</dbReference>
<dbReference type="SUPFAM" id="SSF49493">
    <property type="entry name" value="HSP40/DnaJ peptide-binding domain"/>
    <property type="match status" value="2"/>
</dbReference>
<dbReference type="PROSITE" id="PS00636">
    <property type="entry name" value="DNAJ_1"/>
    <property type="match status" value="1"/>
</dbReference>
<dbReference type="PROSITE" id="PS50076">
    <property type="entry name" value="DNAJ_2"/>
    <property type="match status" value="1"/>
</dbReference>
<dbReference type="PROSITE" id="PS51188">
    <property type="entry name" value="ZF_CR"/>
    <property type="match status" value="1"/>
</dbReference>
<accession>Q7V9C8</accession>
<gene>
    <name evidence="1" type="primary">dnaJ</name>
    <name type="ordered locus">PMT_0022</name>
</gene>
<reference key="1">
    <citation type="journal article" date="2003" name="Nature">
        <title>Genome divergence in two Prochlorococcus ecotypes reflects oceanic niche differentiation.</title>
        <authorList>
            <person name="Rocap G."/>
            <person name="Larimer F.W."/>
            <person name="Lamerdin J.E."/>
            <person name="Malfatti S."/>
            <person name="Chain P."/>
            <person name="Ahlgren N.A."/>
            <person name="Arellano A."/>
            <person name="Coleman M."/>
            <person name="Hauser L."/>
            <person name="Hess W.R."/>
            <person name="Johnson Z.I."/>
            <person name="Land M.L."/>
            <person name="Lindell D."/>
            <person name="Post A.F."/>
            <person name="Regala W."/>
            <person name="Shah M."/>
            <person name="Shaw S.L."/>
            <person name="Steglich C."/>
            <person name="Sullivan M.B."/>
            <person name="Ting C.S."/>
            <person name="Tolonen A."/>
            <person name="Webb E.A."/>
            <person name="Zinser E.R."/>
            <person name="Chisholm S.W."/>
        </authorList>
    </citation>
    <scope>NUCLEOTIDE SEQUENCE [LARGE SCALE GENOMIC DNA]</scope>
    <source>
        <strain>MIT 9313</strain>
    </source>
</reference>
<organism>
    <name type="scientific">Prochlorococcus marinus (strain MIT 9313)</name>
    <dbReference type="NCBI Taxonomy" id="74547"/>
    <lineage>
        <taxon>Bacteria</taxon>
        <taxon>Bacillati</taxon>
        <taxon>Cyanobacteriota</taxon>
        <taxon>Cyanophyceae</taxon>
        <taxon>Synechococcales</taxon>
        <taxon>Prochlorococcaceae</taxon>
        <taxon>Prochlorococcus</taxon>
    </lineage>
</organism>
<evidence type="ECO:0000255" key="1">
    <source>
        <dbReference type="HAMAP-Rule" id="MF_01152"/>
    </source>
</evidence>
<keyword id="KW-0143">Chaperone</keyword>
<keyword id="KW-0963">Cytoplasm</keyword>
<keyword id="KW-0235">DNA replication</keyword>
<keyword id="KW-0479">Metal-binding</keyword>
<keyword id="KW-1185">Reference proteome</keyword>
<keyword id="KW-0677">Repeat</keyword>
<keyword id="KW-0346">Stress response</keyword>
<keyword id="KW-0862">Zinc</keyword>
<keyword id="KW-0863">Zinc-finger</keyword>
<protein>
    <recommendedName>
        <fullName evidence="1">Chaperone protein DnaJ</fullName>
    </recommendedName>
</protein>